<keyword id="KW-0975">Bacterial flagellum</keyword>
<keyword id="KW-0574">Periplasm</keyword>
<keyword id="KW-0732">Signal</keyword>
<feature type="signal peptide" evidence="1">
    <location>
        <begin position="1"/>
        <end position="20"/>
    </location>
</feature>
<feature type="chain" id="PRO_1000134844" description="Flagellar P-ring protein">
    <location>
        <begin position="21"/>
        <end position="363"/>
    </location>
</feature>
<proteinExistence type="inferred from homology"/>
<evidence type="ECO:0000255" key="1">
    <source>
        <dbReference type="HAMAP-Rule" id="MF_00416"/>
    </source>
</evidence>
<comment type="function">
    <text evidence="1">Assembles around the rod to form the L-ring and probably protects the motor/basal body from shearing forces during rotation.</text>
</comment>
<comment type="subunit">
    <text evidence="1">The basal body constitutes a major portion of the flagellar organelle and consists of four rings (L,P,S, and M) mounted on a central rod.</text>
</comment>
<comment type="subcellular location">
    <subcellularLocation>
        <location evidence="1">Periplasm</location>
    </subcellularLocation>
    <subcellularLocation>
        <location evidence="1">Bacterial flagellum basal body</location>
    </subcellularLocation>
</comment>
<comment type="similarity">
    <text evidence="1">Belongs to the FlgI family.</text>
</comment>
<accession>B7VKM6</accession>
<name>FLGI_VIBA3</name>
<gene>
    <name evidence="1" type="primary">flgI</name>
    <name type="ordered locus">VS_0808</name>
</gene>
<reference key="1">
    <citation type="submission" date="2009-02" db="EMBL/GenBank/DDBJ databases">
        <title>Vibrio splendidus str. LGP32 complete genome.</title>
        <authorList>
            <person name="Mazel D."/>
            <person name="Le Roux F."/>
        </authorList>
    </citation>
    <scope>NUCLEOTIDE SEQUENCE [LARGE SCALE GENOMIC DNA]</scope>
    <source>
        <strain>LGP32</strain>
    </source>
</reference>
<protein>
    <recommendedName>
        <fullName evidence="1">Flagellar P-ring protein</fullName>
    </recommendedName>
    <alternativeName>
        <fullName evidence="1">Basal body P-ring protein</fullName>
    </alternativeName>
</protein>
<organism>
    <name type="scientific">Vibrio atlanticus (strain LGP32)</name>
    <name type="common">Vibrio splendidus (strain Mel32)</name>
    <dbReference type="NCBI Taxonomy" id="575788"/>
    <lineage>
        <taxon>Bacteria</taxon>
        <taxon>Pseudomonadati</taxon>
        <taxon>Pseudomonadota</taxon>
        <taxon>Gammaproteobacteria</taxon>
        <taxon>Vibrionales</taxon>
        <taxon>Vibrionaceae</taxon>
        <taxon>Vibrio</taxon>
    </lineage>
</organism>
<dbReference type="EMBL" id="FM954972">
    <property type="protein sequence ID" value="CAV17798.1"/>
    <property type="molecule type" value="Genomic_DNA"/>
</dbReference>
<dbReference type="SMR" id="B7VKM6"/>
<dbReference type="STRING" id="575788.VS_0808"/>
<dbReference type="KEGG" id="vsp:VS_0808"/>
<dbReference type="eggNOG" id="COG1706">
    <property type="taxonomic scope" value="Bacteria"/>
</dbReference>
<dbReference type="HOGENOM" id="CLU_045235_1_0_6"/>
<dbReference type="Proteomes" id="UP000009100">
    <property type="component" value="Chromosome 1"/>
</dbReference>
<dbReference type="GO" id="GO:0009428">
    <property type="term" value="C:bacterial-type flagellum basal body, distal rod, P ring"/>
    <property type="evidence" value="ECO:0007669"/>
    <property type="project" value="InterPro"/>
</dbReference>
<dbReference type="GO" id="GO:0030288">
    <property type="term" value="C:outer membrane-bounded periplasmic space"/>
    <property type="evidence" value="ECO:0007669"/>
    <property type="project" value="InterPro"/>
</dbReference>
<dbReference type="GO" id="GO:0005198">
    <property type="term" value="F:structural molecule activity"/>
    <property type="evidence" value="ECO:0007669"/>
    <property type="project" value="InterPro"/>
</dbReference>
<dbReference type="GO" id="GO:0071973">
    <property type="term" value="P:bacterial-type flagellum-dependent cell motility"/>
    <property type="evidence" value="ECO:0007669"/>
    <property type="project" value="InterPro"/>
</dbReference>
<dbReference type="HAMAP" id="MF_00416">
    <property type="entry name" value="FlgI"/>
    <property type="match status" value="1"/>
</dbReference>
<dbReference type="InterPro" id="IPR001782">
    <property type="entry name" value="Flag_FlgI"/>
</dbReference>
<dbReference type="NCBIfam" id="NF003676">
    <property type="entry name" value="PRK05303.1"/>
    <property type="match status" value="1"/>
</dbReference>
<dbReference type="PANTHER" id="PTHR30381">
    <property type="entry name" value="FLAGELLAR P-RING PERIPLASMIC PROTEIN FLGI"/>
    <property type="match status" value="1"/>
</dbReference>
<dbReference type="PANTHER" id="PTHR30381:SF0">
    <property type="entry name" value="FLAGELLAR P-RING PROTEIN"/>
    <property type="match status" value="1"/>
</dbReference>
<dbReference type="Pfam" id="PF02119">
    <property type="entry name" value="FlgI"/>
    <property type="match status" value="1"/>
</dbReference>
<dbReference type="PRINTS" id="PR01010">
    <property type="entry name" value="FLGPRINGFLGI"/>
</dbReference>
<sequence>MKKLTLVLFGMLFLASSAHAARIKDVAKVAGVRSNQLVGYGLVTGLPGTGETTPFTDQTFNAMLQNFGIQLPPGTKPKTKNVAAVIVTAELPAFSKQGQEVDVTVSSIGSAKSLRGGTLLQTFLKGLDGQVYAVAQGNLVVSGFSAQGNDGSKLVGNNPNVGIISSGATVEQEIPTPFGRGDYITFNLIQSDFTTAQRLADAVNNFLGPQMASAVDATSVKVRAPREISQRVAFLSAIENIEFDPAEGSAKIIVNSRTGTIVVGKHVRLKAAAVTHGGMTVAIKENLNVSQPNAFSGGQTVVVPDSDIEVTEADGKMFKFEPGLTLDDLVRAVNEVGAAPSDLMAILQALKQAGAIEGQLIII</sequence>